<dbReference type="EC" id="2.4.2.7" evidence="1"/>
<dbReference type="EMBL" id="AE014075">
    <property type="protein sequence ID" value="AAN79066.1"/>
    <property type="status" value="ALT_INIT"/>
    <property type="molecule type" value="Genomic_DNA"/>
</dbReference>
<dbReference type="RefSeq" id="WP_000127356.1">
    <property type="nucleotide sequence ID" value="NZ_CP051263.1"/>
</dbReference>
<dbReference type="SMR" id="P69504"/>
<dbReference type="STRING" id="199310.c0588"/>
<dbReference type="GeneID" id="93776981"/>
<dbReference type="KEGG" id="ecc:c0588"/>
<dbReference type="eggNOG" id="COG0503">
    <property type="taxonomic scope" value="Bacteria"/>
</dbReference>
<dbReference type="HOGENOM" id="CLU_063339_3_0_6"/>
<dbReference type="UniPathway" id="UPA00588">
    <property type="reaction ID" value="UER00646"/>
</dbReference>
<dbReference type="Proteomes" id="UP000001410">
    <property type="component" value="Chromosome"/>
</dbReference>
<dbReference type="GO" id="GO:0005737">
    <property type="term" value="C:cytoplasm"/>
    <property type="evidence" value="ECO:0007669"/>
    <property type="project" value="UniProtKB-SubCell"/>
</dbReference>
<dbReference type="GO" id="GO:0002055">
    <property type="term" value="F:adenine binding"/>
    <property type="evidence" value="ECO:0007669"/>
    <property type="project" value="TreeGrafter"/>
</dbReference>
<dbReference type="GO" id="GO:0003999">
    <property type="term" value="F:adenine phosphoribosyltransferase activity"/>
    <property type="evidence" value="ECO:0007669"/>
    <property type="project" value="UniProtKB-UniRule"/>
</dbReference>
<dbReference type="GO" id="GO:0016208">
    <property type="term" value="F:AMP binding"/>
    <property type="evidence" value="ECO:0007669"/>
    <property type="project" value="TreeGrafter"/>
</dbReference>
<dbReference type="GO" id="GO:0006168">
    <property type="term" value="P:adenine salvage"/>
    <property type="evidence" value="ECO:0007669"/>
    <property type="project" value="InterPro"/>
</dbReference>
<dbReference type="GO" id="GO:0044209">
    <property type="term" value="P:AMP salvage"/>
    <property type="evidence" value="ECO:0007669"/>
    <property type="project" value="UniProtKB-UniRule"/>
</dbReference>
<dbReference type="GO" id="GO:0006166">
    <property type="term" value="P:purine ribonucleoside salvage"/>
    <property type="evidence" value="ECO:0007669"/>
    <property type="project" value="UniProtKB-KW"/>
</dbReference>
<dbReference type="CDD" id="cd06223">
    <property type="entry name" value="PRTases_typeI"/>
    <property type="match status" value="1"/>
</dbReference>
<dbReference type="FunFam" id="3.40.50.2020:FF:000004">
    <property type="entry name" value="Adenine phosphoribosyltransferase"/>
    <property type="match status" value="1"/>
</dbReference>
<dbReference type="Gene3D" id="3.40.50.2020">
    <property type="match status" value="1"/>
</dbReference>
<dbReference type="HAMAP" id="MF_00004">
    <property type="entry name" value="Aden_phosphoribosyltr"/>
    <property type="match status" value="1"/>
</dbReference>
<dbReference type="InterPro" id="IPR005764">
    <property type="entry name" value="Ade_phspho_trans"/>
</dbReference>
<dbReference type="InterPro" id="IPR000836">
    <property type="entry name" value="PRibTrfase_dom"/>
</dbReference>
<dbReference type="InterPro" id="IPR029057">
    <property type="entry name" value="PRTase-like"/>
</dbReference>
<dbReference type="InterPro" id="IPR050054">
    <property type="entry name" value="UPRTase/APRTase"/>
</dbReference>
<dbReference type="NCBIfam" id="TIGR01090">
    <property type="entry name" value="apt"/>
    <property type="match status" value="1"/>
</dbReference>
<dbReference type="NCBIfam" id="NF002632">
    <property type="entry name" value="PRK02304.1-1"/>
    <property type="match status" value="1"/>
</dbReference>
<dbReference type="NCBIfam" id="NF002633">
    <property type="entry name" value="PRK02304.1-2"/>
    <property type="match status" value="1"/>
</dbReference>
<dbReference type="NCBIfam" id="NF002634">
    <property type="entry name" value="PRK02304.1-3"/>
    <property type="match status" value="1"/>
</dbReference>
<dbReference type="NCBIfam" id="NF002636">
    <property type="entry name" value="PRK02304.1-5"/>
    <property type="match status" value="1"/>
</dbReference>
<dbReference type="PANTHER" id="PTHR32315">
    <property type="entry name" value="ADENINE PHOSPHORIBOSYLTRANSFERASE"/>
    <property type="match status" value="1"/>
</dbReference>
<dbReference type="PANTHER" id="PTHR32315:SF3">
    <property type="entry name" value="ADENINE PHOSPHORIBOSYLTRANSFERASE"/>
    <property type="match status" value="1"/>
</dbReference>
<dbReference type="Pfam" id="PF00156">
    <property type="entry name" value="Pribosyltran"/>
    <property type="match status" value="1"/>
</dbReference>
<dbReference type="SUPFAM" id="SSF53271">
    <property type="entry name" value="PRTase-like"/>
    <property type="match status" value="1"/>
</dbReference>
<dbReference type="PROSITE" id="PS00103">
    <property type="entry name" value="PUR_PYR_PR_TRANSFER"/>
    <property type="match status" value="1"/>
</dbReference>
<comment type="function">
    <text evidence="1">Catalyzes a salvage reaction resulting in the formation of AMP, that is energically less costly than de novo synthesis.</text>
</comment>
<comment type="catalytic activity">
    <reaction evidence="1">
        <text>AMP + diphosphate = 5-phospho-alpha-D-ribose 1-diphosphate + adenine</text>
        <dbReference type="Rhea" id="RHEA:16609"/>
        <dbReference type="ChEBI" id="CHEBI:16708"/>
        <dbReference type="ChEBI" id="CHEBI:33019"/>
        <dbReference type="ChEBI" id="CHEBI:58017"/>
        <dbReference type="ChEBI" id="CHEBI:456215"/>
        <dbReference type="EC" id="2.4.2.7"/>
    </reaction>
</comment>
<comment type="pathway">
    <text evidence="1">Purine metabolism; AMP biosynthesis via salvage pathway; AMP from adenine: step 1/1.</text>
</comment>
<comment type="subunit">
    <text evidence="1">Homodimer.</text>
</comment>
<comment type="subcellular location">
    <subcellularLocation>
        <location evidence="1">Cytoplasm</location>
    </subcellularLocation>
</comment>
<comment type="similarity">
    <text evidence="1">Belongs to the purine/pyrimidine phosphoribosyltransferase family.</text>
</comment>
<comment type="sequence caution" evidence="2">
    <conflict type="erroneous initiation">
        <sequence resource="EMBL-CDS" id="AAN79066"/>
    </conflict>
</comment>
<protein>
    <recommendedName>
        <fullName evidence="1">Adenine phosphoribosyltransferase</fullName>
        <shortName evidence="1">APRT</shortName>
        <ecNumber evidence="1">2.4.2.7</ecNumber>
    </recommendedName>
</protein>
<proteinExistence type="inferred from homology"/>
<organism>
    <name type="scientific">Escherichia coli O6:H1 (strain CFT073 / ATCC 700928 / UPEC)</name>
    <dbReference type="NCBI Taxonomy" id="199310"/>
    <lineage>
        <taxon>Bacteria</taxon>
        <taxon>Pseudomonadati</taxon>
        <taxon>Pseudomonadota</taxon>
        <taxon>Gammaproteobacteria</taxon>
        <taxon>Enterobacterales</taxon>
        <taxon>Enterobacteriaceae</taxon>
        <taxon>Escherichia</taxon>
    </lineage>
</organism>
<evidence type="ECO:0000255" key="1">
    <source>
        <dbReference type="HAMAP-Rule" id="MF_00004"/>
    </source>
</evidence>
<evidence type="ECO:0000305" key="2"/>
<sequence>MTATAQQLEYLKNSIKSIQDYPKPGILFRDVTSLLEDPKAYALSIDLLVERYKNAGITKVVGTEARGFLFGAPVALGLGVGFVPVRKPGKLPRETISETYDLEYGTDQLEIHVDAIKPGDKVLVVDDLLATGGTIEATVKLIRRLGGEVADAAFIINLFDLGGEQRLEKQGITSYSLVPFPGH</sequence>
<keyword id="KW-0963">Cytoplasm</keyword>
<keyword id="KW-0328">Glycosyltransferase</keyword>
<keyword id="KW-0660">Purine salvage</keyword>
<keyword id="KW-1185">Reference proteome</keyword>
<keyword id="KW-0808">Transferase</keyword>
<accession>P69504</accession>
<accession>P07672</accession>
<accession>P09993</accession>
<accession>P77121</accession>
<gene>
    <name evidence="1" type="primary">apt</name>
    <name type="ordered locus">c0588</name>
</gene>
<reference key="1">
    <citation type="journal article" date="2002" name="Proc. Natl. Acad. Sci. U.S.A.">
        <title>Extensive mosaic structure revealed by the complete genome sequence of uropathogenic Escherichia coli.</title>
        <authorList>
            <person name="Welch R.A."/>
            <person name="Burland V."/>
            <person name="Plunkett G. III"/>
            <person name="Redford P."/>
            <person name="Roesch P."/>
            <person name="Rasko D."/>
            <person name="Buckles E.L."/>
            <person name="Liou S.-R."/>
            <person name="Boutin A."/>
            <person name="Hackett J."/>
            <person name="Stroud D."/>
            <person name="Mayhew G.F."/>
            <person name="Rose D.J."/>
            <person name="Zhou S."/>
            <person name="Schwartz D.C."/>
            <person name="Perna N.T."/>
            <person name="Mobley H.L.T."/>
            <person name="Donnenberg M.S."/>
            <person name="Blattner F.R."/>
        </authorList>
    </citation>
    <scope>NUCLEOTIDE SEQUENCE [LARGE SCALE GENOMIC DNA]</scope>
    <source>
        <strain>CFT073 / ATCC 700928 / UPEC</strain>
    </source>
</reference>
<name>APT_ECOL6</name>
<feature type="chain" id="PRO_0000149380" description="Adenine phosphoribosyltransferase">
    <location>
        <begin position="1"/>
        <end position="183"/>
    </location>
</feature>